<proteinExistence type="inferred from homology"/>
<sequence length="81" mass="9259">MIKRIVVTEKALRLAEKENKITLIVDRGATKKQIAEEVERLYNVKVEKVNTLITPRGEKKAYVKLTKEHNAMDLLSKLGVL</sequence>
<comment type="function">
    <text evidence="1">Binds to 23S rRNA. One of the proteins that surrounds the polypeptide exit tunnel on the outside of the ribosome.</text>
</comment>
<comment type="subunit">
    <text evidence="1">Part of the 50S ribosomal subunit. Contacts protein L29.</text>
</comment>
<comment type="similarity">
    <text evidence="1">Belongs to the universal ribosomal protein uL23 family.</text>
</comment>
<reference key="1">
    <citation type="journal article" date="2002" name="Proc. Natl. Acad. Sci. U.S.A.">
        <title>Genome sequence of the hyperthermophilic crenarchaeon Pyrobaculum aerophilum.</title>
        <authorList>
            <person name="Fitz-Gibbon S.T."/>
            <person name="Ladner H."/>
            <person name="Kim U.-J."/>
            <person name="Stetter K.O."/>
            <person name="Simon M.I."/>
            <person name="Miller J.H."/>
        </authorList>
    </citation>
    <scope>NUCLEOTIDE SEQUENCE [LARGE SCALE GENOMIC DNA]</scope>
    <source>
        <strain>ATCC 51768 / DSM 7523 / JCM 9630 / CIP 104966 / NBRC 100827 / IM2</strain>
    </source>
</reference>
<evidence type="ECO:0000255" key="1">
    <source>
        <dbReference type="HAMAP-Rule" id="MF_01369"/>
    </source>
</evidence>
<evidence type="ECO:0000305" key="2"/>
<keyword id="KW-1185">Reference proteome</keyword>
<keyword id="KW-0687">Ribonucleoprotein</keyword>
<keyword id="KW-0689">Ribosomal protein</keyword>
<keyword id="KW-0694">RNA-binding</keyword>
<keyword id="KW-0699">rRNA-binding</keyword>
<gene>
    <name evidence="1" type="primary">rpl23</name>
    <name type="ordered locus">PAE1972</name>
</gene>
<dbReference type="EMBL" id="AE009441">
    <property type="protein sequence ID" value="AAL63852.1"/>
    <property type="molecule type" value="Genomic_DNA"/>
</dbReference>
<dbReference type="RefSeq" id="WP_011008323.1">
    <property type="nucleotide sequence ID" value="NC_003364.1"/>
</dbReference>
<dbReference type="SMR" id="Q8ZW50"/>
<dbReference type="FunCoup" id="Q8ZW50">
    <property type="interactions" value="157"/>
</dbReference>
<dbReference type="STRING" id="178306.PAE1972"/>
<dbReference type="EnsemblBacteria" id="AAL63852">
    <property type="protein sequence ID" value="AAL63852"/>
    <property type="gene ID" value="PAE1972"/>
</dbReference>
<dbReference type="GeneID" id="1464175"/>
<dbReference type="KEGG" id="pai:PAE1972"/>
<dbReference type="PATRIC" id="fig|178306.9.peg.1456"/>
<dbReference type="eggNOG" id="arCOG04072">
    <property type="taxonomic scope" value="Archaea"/>
</dbReference>
<dbReference type="HOGENOM" id="CLU_037562_4_2_2"/>
<dbReference type="InParanoid" id="Q8ZW50"/>
<dbReference type="Proteomes" id="UP000002439">
    <property type="component" value="Chromosome"/>
</dbReference>
<dbReference type="GO" id="GO:0022625">
    <property type="term" value="C:cytosolic large ribosomal subunit"/>
    <property type="evidence" value="ECO:0000318"/>
    <property type="project" value="GO_Central"/>
</dbReference>
<dbReference type="GO" id="GO:0019843">
    <property type="term" value="F:rRNA binding"/>
    <property type="evidence" value="ECO:0007669"/>
    <property type="project" value="UniProtKB-UniRule"/>
</dbReference>
<dbReference type="GO" id="GO:0003735">
    <property type="term" value="F:structural constituent of ribosome"/>
    <property type="evidence" value="ECO:0000318"/>
    <property type="project" value="GO_Central"/>
</dbReference>
<dbReference type="GO" id="GO:0006412">
    <property type="term" value="P:translation"/>
    <property type="evidence" value="ECO:0007669"/>
    <property type="project" value="UniProtKB-UniRule"/>
</dbReference>
<dbReference type="FunFam" id="3.30.70.330:FF:000532">
    <property type="entry name" value="50S ribosomal protein L23"/>
    <property type="match status" value="1"/>
</dbReference>
<dbReference type="Gene3D" id="3.30.70.330">
    <property type="match status" value="1"/>
</dbReference>
<dbReference type="HAMAP" id="MF_01369_A">
    <property type="entry name" value="Ribosomal_uL23_A"/>
    <property type="match status" value="1"/>
</dbReference>
<dbReference type="InterPro" id="IPR012677">
    <property type="entry name" value="Nucleotide-bd_a/b_plait_sf"/>
</dbReference>
<dbReference type="InterPro" id="IPR019985">
    <property type="entry name" value="Ribosomal_uL23"/>
</dbReference>
<dbReference type="InterPro" id="IPR013025">
    <property type="entry name" value="Ribosomal_uL23-like"/>
</dbReference>
<dbReference type="InterPro" id="IPR012678">
    <property type="entry name" value="Ribosomal_uL23/eL15/eS24_sf"/>
</dbReference>
<dbReference type="InterPro" id="IPR001014">
    <property type="entry name" value="Ribosomal_uL23_CS"/>
</dbReference>
<dbReference type="NCBIfam" id="NF011118">
    <property type="entry name" value="PRK14548.1"/>
    <property type="match status" value="1"/>
</dbReference>
<dbReference type="NCBIfam" id="TIGR03636">
    <property type="entry name" value="uL23_arch"/>
    <property type="match status" value="1"/>
</dbReference>
<dbReference type="PANTHER" id="PTHR11620">
    <property type="entry name" value="60S RIBOSOMAL PROTEIN L23A"/>
    <property type="match status" value="1"/>
</dbReference>
<dbReference type="Pfam" id="PF00276">
    <property type="entry name" value="Ribosomal_L23"/>
    <property type="match status" value="1"/>
</dbReference>
<dbReference type="SUPFAM" id="SSF54189">
    <property type="entry name" value="Ribosomal proteins S24e, L23 and L15e"/>
    <property type="match status" value="1"/>
</dbReference>
<dbReference type="PROSITE" id="PS00050">
    <property type="entry name" value="RIBOSOMAL_L23"/>
    <property type="match status" value="1"/>
</dbReference>
<organism>
    <name type="scientific">Pyrobaculum aerophilum (strain ATCC 51768 / DSM 7523 / JCM 9630 / CIP 104966 / NBRC 100827 / IM2)</name>
    <dbReference type="NCBI Taxonomy" id="178306"/>
    <lineage>
        <taxon>Archaea</taxon>
        <taxon>Thermoproteota</taxon>
        <taxon>Thermoprotei</taxon>
        <taxon>Thermoproteales</taxon>
        <taxon>Thermoproteaceae</taxon>
        <taxon>Pyrobaculum</taxon>
    </lineage>
</organism>
<name>RL23_PYRAE</name>
<feature type="chain" id="PRO_0000272952" description="Large ribosomal subunit protein uL23">
    <location>
        <begin position="1"/>
        <end position="81"/>
    </location>
</feature>
<protein>
    <recommendedName>
        <fullName evidence="1">Large ribosomal subunit protein uL23</fullName>
    </recommendedName>
    <alternativeName>
        <fullName evidence="2">50S ribosomal protein L23</fullName>
    </alternativeName>
</protein>
<accession>Q8ZW50</accession>